<protein>
    <recommendedName>
        <fullName evidence="1">Phosphomethylpyrimidine synthase</fullName>
        <ecNumber evidence="1">4.1.99.17</ecNumber>
    </recommendedName>
    <alternativeName>
        <fullName evidence="1">Hydroxymethylpyrimidine phosphate synthase</fullName>
        <shortName evidence="1">HMP-P synthase</shortName>
        <shortName evidence="1">HMP-phosphate synthase</shortName>
        <shortName evidence="1">HMPP synthase</shortName>
    </alternativeName>
    <alternativeName>
        <fullName evidence="1">Thiamine biosynthesis protein ThiC</fullName>
    </alternativeName>
</protein>
<evidence type="ECO:0000255" key="1">
    <source>
        <dbReference type="HAMAP-Rule" id="MF_00089"/>
    </source>
</evidence>
<reference key="1">
    <citation type="journal article" date="2011" name="Stand. Genomic Sci.">
        <title>Complete genome sequence of Parvibaculum lavamentivorans type strain (DS-1(T)).</title>
        <authorList>
            <person name="Schleheck D."/>
            <person name="Weiss M."/>
            <person name="Pitluck S."/>
            <person name="Bruce D."/>
            <person name="Land M.L."/>
            <person name="Han S."/>
            <person name="Saunders E."/>
            <person name="Tapia R."/>
            <person name="Detter C."/>
            <person name="Brettin T."/>
            <person name="Han J."/>
            <person name="Woyke T."/>
            <person name="Goodwin L."/>
            <person name="Pennacchio L."/>
            <person name="Nolan M."/>
            <person name="Cook A.M."/>
            <person name="Kjelleberg S."/>
            <person name="Thomas T."/>
        </authorList>
    </citation>
    <scope>NUCLEOTIDE SEQUENCE [LARGE SCALE GENOMIC DNA]</scope>
    <source>
        <strain>DS-1 / DSM 13023 / NCIMB 13966</strain>
    </source>
</reference>
<feature type="chain" id="PRO_1000071254" description="Phosphomethylpyrimidine synthase">
    <location>
        <begin position="1"/>
        <end position="623"/>
    </location>
</feature>
<feature type="binding site" evidence="1">
    <location>
        <position position="221"/>
    </location>
    <ligand>
        <name>substrate</name>
    </ligand>
</feature>
<feature type="binding site" evidence="1">
    <location>
        <position position="250"/>
    </location>
    <ligand>
        <name>substrate</name>
    </ligand>
</feature>
<feature type="binding site" evidence="1">
    <location>
        <position position="279"/>
    </location>
    <ligand>
        <name>substrate</name>
    </ligand>
</feature>
<feature type="binding site" evidence="1">
    <location>
        <position position="315"/>
    </location>
    <ligand>
        <name>substrate</name>
    </ligand>
</feature>
<feature type="binding site" evidence="1">
    <location>
        <begin position="335"/>
        <end position="337"/>
    </location>
    <ligand>
        <name>substrate</name>
    </ligand>
</feature>
<feature type="binding site" evidence="1">
    <location>
        <begin position="376"/>
        <end position="379"/>
    </location>
    <ligand>
        <name>substrate</name>
    </ligand>
</feature>
<feature type="binding site" evidence="1">
    <location>
        <position position="415"/>
    </location>
    <ligand>
        <name>substrate</name>
    </ligand>
</feature>
<feature type="binding site" evidence="1">
    <location>
        <position position="419"/>
    </location>
    <ligand>
        <name>Zn(2+)</name>
        <dbReference type="ChEBI" id="CHEBI:29105"/>
    </ligand>
</feature>
<feature type="binding site" evidence="1">
    <location>
        <position position="442"/>
    </location>
    <ligand>
        <name>substrate</name>
    </ligand>
</feature>
<feature type="binding site" evidence="1">
    <location>
        <position position="483"/>
    </location>
    <ligand>
        <name>Zn(2+)</name>
        <dbReference type="ChEBI" id="CHEBI:29105"/>
    </ligand>
</feature>
<feature type="binding site" evidence="1">
    <location>
        <position position="563"/>
    </location>
    <ligand>
        <name>[4Fe-4S] cluster</name>
        <dbReference type="ChEBI" id="CHEBI:49883"/>
        <note>4Fe-4S-S-AdoMet</note>
    </ligand>
</feature>
<feature type="binding site" evidence="1">
    <location>
        <position position="566"/>
    </location>
    <ligand>
        <name>[4Fe-4S] cluster</name>
        <dbReference type="ChEBI" id="CHEBI:49883"/>
        <note>4Fe-4S-S-AdoMet</note>
    </ligand>
</feature>
<feature type="binding site" evidence="1">
    <location>
        <position position="571"/>
    </location>
    <ligand>
        <name>[4Fe-4S] cluster</name>
        <dbReference type="ChEBI" id="CHEBI:49883"/>
        <note>4Fe-4S-S-AdoMet</note>
    </ligand>
</feature>
<proteinExistence type="inferred from homology"/>
<organism>
    <name type="scientific">Parvibaculum lavamentivorans (strain DS-1 / DSM 13023 / NCIMB 13966)</name>
    <dbReference type="NCBI Taxonomy" id="402881"/>
    <lineage>
        <taxon>Bacteria</taxon>
        <taxon>Pseudomonadati</taxon>
        <taxon>Pseudomonadota</taxon>
        <taxon>Alphaproteobacteria</taxon>
        <taxon>Hyphomicrobiales</taxon>
        <taxon>Parvibaculaceae</taxon>
        <taxon>Parvibaculum</taxon>
    </lineage>
</organism>
<name>THIC_PARL1</name>
<dbReference type="EC" id="4.1.99.17" evidence="1"/>
<dbReference type="EMBL" id="CP000774">
    <property type="protein sequence ID" value="ABS63763.1"/>
    <property type="molecule type" value="Genomic_DNA"/>
</dbReference>
<dbReference type="RefSeq" id="WP_012111068.1">
    <property type="nucleotide sequence ID" value="NC_009719.1"/>
</dbReference>
<dbReference type="SMR" id="A7HV30"/>
<dbReference type="STRING" id="402881.Plav_2149"/>
<dbReference type="KEGG" id="pla:Plav_2149"/>
<dbReference type="eggNOG" id="COG0422">
    <property type="taxonomic scope" value="Bacteria"/>
</dbReference>
<dbReference type="HOGENOM" id="CLU_013181_2_1_5"/>
<dbReference type="OrthoDB" id="9805897at2"/>
<dbReference type="UniPathway" id="UPA00060"/>
<dbReference type="Proteomes" id="UP000006377">
    <property type="component" value="Chromosome"/>
</dbReference>
<dbReference type="GO" id="GO:0005829">
    <property type="term" value="C:cytosol"/>
    <property type="evidence" value="ECO:0007669"/>
    <property type="project" value="TreeGrafter"/>
</dbReference>
<dbReference type="GO" id="GO:0051539">
    <property type="term" value="F:4 iron, 4 sulfur cluster binding"/>
    <property type="evidence" value="ECO:0007669"/>
    <property type="project" value="UniProtKB-KW"/>
</dbReference>
<dbReference type="GO" id="GO:0016830">
    <property type="term" value="F:carbon-carbon lyase activity"/>
    <property type="evidence" value="ECO:0007669"/>
    <property type="project" value="InterPro"/>
</dbReference>
<dbReference type="GO" id="GO:0008270">
    <property type="term" value="F:zinc ion binding"/>
    <property type="evidence" value="ECO:0007669"/>
    <property type="project" value="UniProtKB-UniRule"/>
</dbReference>
<dbReference type="GO" id="GO:0009228">
    <property type="term" value="P:thiamine biosynthetic process"/>
    <property type="evidence" value="ECO:0007669"/>
    <property type="project" value="UniProtKB-KW"/>
</dbReference>
<dbReference type="GO" id="GO:0009229">
    <property type="term" value="P:thiamine diphosphate biosynthetic process"/>
    <property type="evidence" value="ECO:0007669"/>
    <property type="project" value="UniProtKB-UniRule"/>
</dbReference>
<dbReference type="FunFam" id="3.20.20.540:FF:000001">
    <property type="entry name" value="Phosphomethylpyrimidine synthase"/>
    <property type="match status" value="1"/>
</dbReference>
<dbReference type="Gene3D" id="6.10.250.620">
    <property type="match status" value="1"/>
</dbReference>
<dbReference type="Gene3D" id="3.20.20.540">
    <property type="entry name" value="Radical SAM ThiC family, central domain"/>
    <property type="match status" value="1"/>
</dbReference>
<dbReference type="HAMAP" id="MF_00089">
    <property type="entry name" value="ThiC"/>
    <property type="match status" value="1"/>
</dbReference>
<dbReference type="InterPro" id="IPR037509">
    <property type="entry name" value="ThiC"/>
</dbReference>
<dbReference type="InterPro" id="IPR025747">
    <property type="entry name" value="ThiC-associated_dom"/>
</dbReference>
<dbReference type="InterPro" id="IPR038521">
    <property type="entry name" value="ThiC/Bza_core_dom"/>
</dbReference>
<dbReference type="InterPro" id="IPR002817">
    <property type="entry name" value="ThiC/BzaA/B"/>
</dbReference>
<dbReference type="NCBIfam" id="NF006763">
    <property type="entry name" value="PRK09284.1"/>
    <property type="match status" value="1"/>
</dbReference>
<dbReference type="NCBIfam" id="NF009895">
    <property type="entry name" value="PRK13352.1"/>
    <property type="match status" value="1"/>
</dbReference>
<dbReference type="NCBIfam" id="TIGR00190">
    <property type="entry name" value="thiC"/>
    <property type="match status" value="1"/>
</dbReference>
<dbReference type="PANTHER" id="PTHR30557:SF1">
    <property type="entry name" value="PHOSPHOMETHYLPYRIMIDINE SYNTHASE, CHLOROPLASTIC"/>
    <property type="match status" value="1"/>
</dbReference>
<dbReference type="PANTHER" id="PTHR30557">
    <property type="entry name" value="THIAMINE BIOSYNTHESIS PROTEIN THIC"/>
    <property type="match status" value="1"/>
</dbReference>
<dbReference type="Pfam" id="PF13667">
    <property type="entry name" value="ThiC-associated"/>
    <property type="match status" value="1"/>
</dbReference>
<dbReference type="Pfam" id="PF01964">
    <property type="entry name" value="ThiC_Rad_SAM"/>
    <property type="match status" value="1"/>
</dbReference>
<dbReference type="SFLD" id="SFLDF00407">
    <property type="entry name" value="phosphomethylpyrimidine_syntha"/>
    <property type="match status" value="1"/>
</dbReference>
<dbReference type="SFLD" id="SFLDG01114">
    <property type="entry name" value="phosphomethylpyrimidine_syntha"/>
    <property type="match status" value="1"/>
</dbReference>
<dbReference type="SFLD" id="SFLDS00113">
    <property type="entry name" value="Radical_SAM_Phosphomethylpyrim"/>
    <property type="match status" value="1"/>
</dbReference>
<comment type="function">
    <text evidence="1">Catalyzes the synthesis of the hydroxymethylpyrimidine phosphate (HMP-P) moiety of thiamine from aminoimidazole ribotide (AIR) in a radical S-adenosyl-L-methionine (SAM)-dependent reaction.</text>
</comment>
<comment type="catalytic activity">
    <reaction evidence="1">
        <text>5-amino-1-(5-phospho-beta-D-ribosyl)imidazole + S-adenosyl-L-methionine = 4-amino-2-methyl-5-(phosphooxymethyl)pyrimidine + CO + 5'-deoxyadenosine + formate + L-methionine + 3 H(+)</text>
        <dbReference type="Rhea" id="RHEA:24840"/>
        <dbReference type="ChEBI" id="CHEBI:15378"/>
        <dbReference type="ChEBI" id="CHEBI:15740"/>
        <dbReference type="ChEBI" id="CHEBI:17245"/>
        <dbReference type="ChEBI" id="CHEBI:17319"/>
        <dbReference type="ChEBI" id="CHEBI:57844"/>
        <dbReference type="ChEBI" id="CHEBI:58354"/>
        <dbReference type="ChEBI" id="CHEBI:59789"/>
        <dbReference type="ChEBI" id="CHEBI:137981"/>
        <dbReference type="EC" id="4.1.99.17"/>
    </reaction>
</comment>
<comment type="cofactor">
    <cofactor evidence="1">
        <name>[4Fe-4S] cluster</name>
        <dbReference type="ChEBI" id="CHEBI:49883"/>
    </cofactor>
    <text evidence="1">Binds 1 [4Fe-4S] cluster per subunit. The cluster is coordinated with 3 cysteines and an exchangeable S-adenosyl-L-methionine.</text>
</comment>
<comment type="pathway">
    <text evidence="1">Cofactor biosynthesis; thiamine diphosphate biosynthesis.</text>
</comment>
<comment type="subunit">
    <text evidence="1">Homodimer.</text>
</comment>
<comment type="similarity">
    <text evidence="1">Belongs to the ThiC family.</text>
</comment>
<keyword id="KW-0004">4Fe-4S</keyword>
<keyword id="KW-0408">Iron</keyword>
<keyword id="KW-0411">Iron-sulfur</keyword>
<keyword id="KW-0456">Lyase</keyword>
<keyword id="KW-0479">Metal-binding</keyword>
<keyword id="KW-1185">Reference proteome</keyword>
<keyword id="KW-0949">S-adenosyl-L-methionine</keyword>
<keyword id="KW-0784">Thiamine biosynthesis</keyword>
<keyword id="KW-0862">Zinc</keyword>
<gene>
    <name evidence="1" type="primary">thiC</name>
    <name type="ordered locus">Plav_2149</name>
</gene>
<accession>A7HV30</accession>
<sequence>MNVHTPRKDEALTVTTGPLPASTKIFTAPEGFPGLKVPFREIALHPSAKEPPVRVYDTSGPYTDPTAQIDLERGLPRTREAWLEARGGTELYEGRDVKPEDNGNVGEKHLARAFPVRNLPRRGLPGHPVTQYEFAKAGIVTAEMAYIAERENMGRKQAAANAAHRIAEGESFGADIPEFITPEFVRDEVAAGRAIIPSNINHPELEPMIIGRNFLVKINANIGNSAVASSVAEEVDKMVWAIRWGADNVMDLSTGRNIHNTREWIIRNSPVPIGTVPIYQALEKVDGIAENLTWEVYRDTLIEQAEQGVDYFTIHAGVRLAYVPLTAKRVTGIVSRGGSIMAKWCLAHHKESFLYTHFEEICDIMRQYDVSFSLGDGLRPGSIADANDEAQFAELETLGELTQIAWAKGCQVMIEGPGHVPMHKIKVNMDKQLKHCGGAPFYTLGPLTTDIAPGYDHITSGIGAAMIGWFGCAMLCYVTPKEHLGLPDRADVKEGVITYKIAAHAADLAKGHPAAQLRDDALSRARFEFRWEDQFNLALDPERAKEFHDRTLPKEAHKVAHFCSMCGPKFCSMKITQEVRDYAESGMADMASEFRNSGGEIYLEEADAAVKASNRALGGKAAE</sequence>